<reference key="1">
    <citation type="submission" date="2008-02" db="EMBL/GenBank/DDBJ databases">
        <title>Complete sequence of Yersinia pseudotuberculosis YPIII.</title>
        <authorList>
            <consortium name="US DOE Joint Genome Institute"/>
            <person name="Copeland A."/>
            <person name="Lucas S."/>
            <person name="Lapidus A."/>
            <person name="Glavina del Rio T."/>
            <person name="Dalin E."/>
            <person name="Tice H."/>
            <person name="Bruce D."/>
            <person name="Goodwin L."/>
            <person name="Pitluck S."/>
            <person name="Munk A.C."/>
            <person name="Brettin T."/>
            <person name="Detter J.C."/>
            <person name="Han C."/>
            <person name="Tapia R."/>
            <person name="Schmutz J."/>
            <person name="Larimer F."/>
            <person name="Land M."/>
            <person name="Hauser L."/>
            <person name="Challacombe J.F."/>
            <person name="Green L."/>
            <person name="Lindler L.E."/>
            <person name="Nikolich M.P."/>
            <person name="Richardson P."/>
        </authorList>
    </citation>
    <scope>NUCLEOTIDE SEQUENCE [LARGE SCALE GENOMIC DNA]</scope>
    <source>
        <strain>YPIII</strain>
    </source>
</reference>
<comment type="function">
    <text evidence="1">Increases the formation of ribosomal termination complexes and stimulates activities of RF-1 and RF-2. It binds guanine nucleotides and has strong preference for UGA stop codons. It may interact directly with the ribosome. The stimulation of RF-1 and RF-2 is significantly reduced by GTP and GDP, but not by GMP.</text>
</comment>
<comment type="subcellular location">
    <subcellularLocation>
        <location evidence="1">Cytoplasm</location>
    </subcellularLocation>
</comment>
<comment type="similarity">
    <text evidence="1">Belongs to the TRAFAC class translation factor GTPase superfamily. Classic translation factor GTPase family. PrfC subfamily.</text>
</comment>
<keyword id="KW-0963">Cytoplasm</keyword>
<keyword id="KW-0342">GTP-binding</keyword>
<keyword id="KW-0547">Nucleotide-binding</keyword>
<keyword id="KW-0648">Protein biosynthesis</keyword>
<dbReference type="EMBL" id="CP000950">
    <property type="protein sequence ID" value="ACA69900.1"/>
    <property type="molecule type" value="Genomic_DNA"/>
</dbReference>
<dbReference type="RefSeq" id="WP_011191681.1">
    <property type="nucleotide sequence ID" value="NZ_CP009792.1"/>
</dbReference>
<dbReference type="SMR" id="B1JL43"/>
<dbReference type="GeneID" id="49787425"/>
<dbReference type="KEGG" id="ypy:YPK_3633"/>
<dbReference type="PATRIC" id="fig|502800.11.peg.4385"/>
<dbReference type="GO" id="GO:0005829">
    <property type="term" value="C:cytosol"/>
    <property type="evidence" value="ECO:0007669"/>
    <property type="project" value="TreeGrafter"/>
</dbReference>
<dbReference type="GO" id="GO:0005525">
    <property type="term" value="F:GTP binding"/>
    <property type="evidence" value="ECO:0007669"/>
    <property type="project" value="UniProtKB-UniRule"/>
</dbReference>
<dbReference type="GO" id="GO:0003924">
    <property type="term" value="F:GTPase activity"/>
    <property type="evidence" value="ECO:0007669"/>
    <property type="project" value="InterPro"/>
</dbReference>
<dbReference type="GO" id="GO:0097216">
    <property type="term" value="F:guanosine tetraphosphate binding"/>
    <property type="evidence" value="ECO:0007669"/>
    <property type="project" value="UniProtKB-ARBA"/>
</dbReference>
<dbReference type="GO" id="GO:0016150">
    <property type="term" value="F:translation release factor activity, codon nonspecific"/>
    <property type="evidence" value="ECO:0007669"/>
    <property type="project" value="TreeGrafter"/>
</dbReference>
<dbReference type="GO" id="GO:0016149">
    <property type="term" value="F:translation release factor activity, codon specific"/>
    <property type="evidence" value="ECO:0007669"/>
    <property type="project" value="UniProtKB-UniRule"/>
</dbReference>
<dbReference type="GO" id="GO:0006449">
    <property type="term" value="P:regulation of translational termination"/>
    <property type="evidence" value="ECO:0007669"/>
    <property type="project" value="UniProtKB-UniRule"/>
</dbReference>
<dbReference type="CDD" id="cd04169">
    <property type="entry name" value="RF3"/>
    <property type="match status" value="1"/>
</dbReference>
<dbReference type="CDD" id="cd03689">
    <property type="entry name" value="RF3_II"/>
    <property type="match status" value="1"/>
</dbReference>
<dbReference type="CDD" id="cd16259">
    <property type="entry name" value="RF3_III"/>
    <property type="match status" value="1"/>
</dbReference>
<dbReference type="FunFam" id="2.40.30.10:FF:000040">
    <property type="entry name" value="Peptide chain release factor 3"/>
    <property type="match status" value="1"/>
</dbReference>
<dbReference type="FunFam" id="3.30.70.3280:FF:000001">
    <property type="entry name" value="Peptide chain release factor 3"/>
    <property type="match status" value="1"/>
</dbReference>
<dbReference type="FunFam" id="3.40.50.300:FF:000542">
    <property type="entry name" value="Peptide chain release factor 3"/>
    <property type="match status" value="1"/>
</dbReference>
<dbReference type="Gene3D" id="3.40.50.300">
    <property type="entry name" value="P-loop containing nucleotide triphosphate hydrolases"/>
    <property type="match status" value="2"/>
</dbReference>
<dbReference type="Gene3D" id="3.30.70.3280">
    <property type="entry name" value="Peptide chain release factor 3, domain III"/>
    <property type="match status" value="1"/>
</dbReference>
<dbReference type="HAMAP" id="MF_00072">
    <property type="entry name" value="Rel_fac_3"/>
    <property type="match status" value="1"/>
</dbReference>
<dbReference type="InterPro" id="IPR053905">
    <property type="entry name" value="EF-G-like_DII"/>
</dbReference>
<dbReference type="InterPro" id="IPR035647">
    <property type="entry name" value="EFG_III/V"/>
</dbReference>
<dbReference type="InterPro" id="IPR031157">
    <property type="entry name" value="G_TR_CS"/>
</dbReference>
<dbReference type="InterPro" id="IPR027417">
    <property type="entry name" value="P-loop_NTPase"/>
</dbReference>
<dbReference type="InterPro" id="IPR004548">
    <property type="entry name" value="PrfC"/>
</dbReference>
<dbReference type="InterPro" id="IPR032090">
    <property type="entry name" value="RF3_C"/>
</dbReference>
<dbReference type="InterPro" id="IPR038467">
    <property type="entry name" value="RF3_dom_3_sf"/>
</dbReference>
<dbReference type="InterPro" id="IPR041732">
    <property type="entry name" value="RF3_GTP-bd"/>
</dbReference>
<dbReference type="InterPro" id="IPR005225">
    <property type="entry name" value="Small_GTP-bd"/>
</dbReference>
<dbReference type="InterPro" id="IPR000795">
    <property type="entry name" value="T_Tr_GTP-bd_dom"/>
</dbReference>
<dbReference type="InterPro" id="IPR009000">
    <property type="entry name" value="Transl_B-barrel_sf"/>
</dbReference>
<dbReference type="NCBIfam" id="TIGR00503">
    <property type="entry name" value="prfC"/>
    <property type="match status" value="1"/>
</dbReference>
<dbReference type="NCBIfam" id="NF001964">
    <property type="entry name" value="PRK00741.1"/>
    <property type="match status" value="1"/>
</dbReference>
<dbReference type="NCBIfam" id="TIGR00231">
    <property type="entry name" value="small_GTP"/>
    <property type="match status" value="1"/>
</dbReference>
<dbReference type="PANTHER" id="PTHR43556">
    <property type="entry name" value="PEPTIDE CHAIN RELEASE FACTOR RF3"/>
    <property type="match status" value="1"/>
</dbReference>
<dbReference type="PANTHER" id="PTHR43556:SF2">
    <property type="entry name" value="PEPTIDE CHAIN RELEASE FACTOR RF3"/>
    <property type="match status" value="1"/>
</dbReference>
<dbReference type="Pfam" id="PF22042">
    <property type="entry name" value="EF-G_D2"/>
    <property type="match status" value="1"/>
</dbReference>
<dbReference type="Pfam" id="PF00009">
    <property type="entry name" value="GTP_EFTU"/>
    <property type="match status" value="1"/>
</dbReference>
<dbReference type="Pfam" id="PF16658">
    <property type="entry name" value="RF3_C"/>
    <property type="match status" value="1"/>
</dbReference>
<dbReference type="PRINTS" id="PR00315">
    <property type="entry name" value="ELONGATNFCT"/>
</dbReference>
<dbReference type="SUPFAM" id="SSF54980">
    <property type="entry name" value="EF-G C-terminal domain-like"/>
    <property type="match status" value="1"/>
</dbReference>
<dbReference type="SUPFAM" id="SSF52540">
    <property type="entry name" value="P-loop containing nucleoside triphosphate hydrolases"/>
    <property type="match status" value="1"/>
</dbReference>
<dbReference type="SUPFAM" id="SSF50447">
    <property type="entry name" value="Translation proteins"/>
    <property type="match status" value="1"/>
</dbReference>
<dbReference type="PROSITE" id="PS00301">
    <property type="entry name" value="G_TR_1"/>
    <property type="match status" value="1"/>
</dbReference>
<dbReference type="PROSITE" id="PS51722">
    <property type="entry name" value="G_TR_2"/>
    <property type="match status" value="1"/>
</dbReference>
<proteinExistence type="inferred from homology"/>
<name>RF3_YERPY</name>
<protein>
    <recommendedName>
        <fullName evidence="1">Peptide chain release factor 3</fullName>
        <shortName evidence="1">RF-3</shortName>
    </recommendedName>
</protein>
<evidence type="ECO:0000255" key="1">
    <source>
        <dbReference type="HAMAP-Rule" id="MF_00072"/>
    </source>
</evidence>
<accession>B1JL43</accession>
<organism>
    <name type="scientific">Yersinia pseudotuberculosis serotype O:3 (strain YPIII)</name>
    <dbReference type="NCBI Taxonomy" id="502800"/>
    <lineage>
        <taxon>Bacteria</taxon>
        <taxon>Pseudomonadati</taxon>
        <taxon>Pseudomonadota</taxon>
        <taxon>Gammaproteobacteria</taxon>
        <taxon>Enterobacterales</taxon>
        <taxon>Yersiniaceae</taxon>
        <taxon>Yersinia</taxon>
    </lineage>
</organism>
<gene>
    <name evidence="1" type="primary">prfC</name>
    <name type="ordered locus">YPK_3633</name>
</gene>
<sequence>MSPSEYALEVAKRRTFAIISHPDAGKTTITEKVLLFGHAIQTAGTVKGRGSSHHAKSDWMEMEKQRGISITTSVMQFPYGGCLVNLLDTPGHEDFSEDTYRTLTAVDCCLMVIDAAKGVEDRTRKLMEVTRLRDTPILTFMNKLDREIRDPMEVLDEVERELNIACSPITWPIGCGKSFKGVYHLHKDETYLYQSGKGHTIQEVRIVKGLNNPDLDVAVGEDLAKQFRQELELVQGASHEFDHEAFLSGDLTPVFFGTALGNFGVDHMLDGLVEWAPAPMPRKTDTRVVVASEEKFTGFVFKIQANMDPKHRDRVAFMRVVSGRFEKGMKLRQVRTKKDVVISDALTFMAGDRSHVEEAYAGDIIGLHNHGTIQIGDTFTQGEDMKFTGIPNFAPELFRRIRLRDPLKQKQLLKGLVQLSEEGAVQVFRPLSNNDLIVGAVGVLQFEVVSSRLKSEYNVEAVYESVNVSTARWVECNDVKKFEEFKRKNELNLALDGGDNLSYIAPTMVNLNITQERYPDVIFRKTREH</sequence>
<feature type="chain" id="PRO_1000092516" description="Peptide chain release factor 3">
    <location>
        <begin position="1"/>
        <end position="529"/>
    </location>
</feature>
<feature type="domain" description="tr-type G">
    <location>
        <begin position="11"/>
        <end position="280"/>
    </location>
</feature>
<feature type="binding site" evidence="1">
    <location>
        <begin position="20"/>
        <end position="27"/>
    </location>
    <ligand>
        <name>GTP</name>
        <dbReference type="ChEBI" id="CHEBI:37565"/>
    </ligand>
</feature>
<feature type="binding site" evidence="1">
    <location>
        <begin position="88"/>
        <end position="92"/>
    </location>
    <ligand>
        <name>GTP</name>
        <dbReference type="ChEBI" id="CHEBI:37565"/>
    </ligand>
</feature>
<feature type="binding site" evidence="1">
    <location>
        <begin position="142"/>
        <end position="145"/>
    </location>
    <ligand>
        <name>GTP</name>
        <dbReference type="ChEBI" id="CHEBI:37565"/>
    </ligand>
</feature>